<organism>
    <name type="scientific">Streptomyces sp</name>
    <dbReference type="NCBI Taxonomy" id="1931"/>
    <lineage>
        <taxon>Bacteria</taxon>
        <taxon>Bacillati</taxon>
        <taxon>Actinomycetota</taxon>
        <taxon>Actinomycetes</taxon>
        <taxon>Kitasatosporales</taxon>
        <taxon>Streptomycetaceae</taxon>
        <taxon>Streptomyces</taxon>
    </lineage>
</organism>
<protein>
    <recommendedName>
        <fullName evidence="3">Salicylyl-CoA synthase / salicylate adenylyltransferase</fullName>
        <ecNumber evidence="2">6.2.1.65</ecNumber>
    </recommendedName>
</protein>
<comment type="function">
    <text evidence="2">Involved in the degradation of salicylate via a pathway involving coenzyme A derivative. Catalyzes the conversion of salicylate to salicyloyl-CoA via the formation of a salicylate-adenylate intermediate. The substrate specificity is strong, since benzoate, 3-hydroxybenzoate, 4-hydroxybenzoate, gentisate, 2-aminobenzoate, aminobenzoate, salicylamide, salicylaldoxime and 2-hydroxyphenyl acetate cannot substitute for salicylate.</text>
</comment>
<comment type="catalytic activity">
    <reaction evidence="2">
        <text>salicylate + ATP + CoA = 2-hydroxybenzoyl-CoA + AMP + diphosphate</text>
        <dbReference type="Rhea" id="RHEA:61668"/>
        <dbReference type="ChEBI" id="CHEBI:30616"/>
        <dbReference type="ChEBI" id="CHEBI:30762"/>
        <dbReference type="ChEBI" id="CHEBI:33019"/>
        <dbReference type="ChEBI" id="CHEBI:57287"/>
        <dbReference type="ChEBI" id="CHEBI:67148"/>
        <dbReference type="ChEBI" id="CHEBI:456215"/>
        <dbReference type="EC" id="6.2.1.65"/>
    </reaction>
</comment>
<comment type="induction">
    <text evidence="2">By salicylate.</text>
</comment>
<comment type="disruption phenotype">
    <text evidence="2">Cells lacking this gene are unable to degrade salicylate.</text>
</comment>
<comment type="similarity">
    <text evidence="4">Belongs to the ATP-dependent AMP-binding enzyme family.</text>
</comment>
<keyword id="KW-0058">Aromatic hydrocarbons catabolism</keyword>
<keyword id="KW-0067">ATP-binding</keyword>
<keyword id="KW-0436">Ligase</keyword>
<keyword id="KW-0547">Nucleotide-binding</keyword>
<dbReference type="EC" id="6.2.1.65" evidence="2"/>
<dbReference type="EMBL" id="AB112586">
    <property type="protein sequence ID" value="BAC78380.1"/>
    <property type="molecule type" value="Genomic_DNA"/>
</dbReference>
<dbReference type="SMR" id="Q7X279"/>
<dbReference type="KEGG" id="ag:BAC78380"/>
<dbReference type="BioCyc" id="MetaCyc:MONOMER-15914"/>
<dbReference type="BRENDA" id="6.2.1.65">
    <property type="organism ID" value="17525"/>
</dbReference>
<dbReference type="GO" id="GO:0016747">
    <property type="term" value="F:acyltransferase activity, transferring groups other than amino-acyl groups"/>
    <property type="evidence" value="ECO:0000315"/>
    <property type="project" value="UniProtKB"/>
</dbReference>
<dbReference type="GO" id="GO:0005524">
    <property type="term" value="F:ATP binding"/>
    <property type="evidence" value="ECO:0007669"/>
    <property type="project" value="UniProtKB-KW"/>
</dbReference>
<dbReference type="GO" id="GO:0031956">
    <property type="term" value="F:medium-chain fatty acid-CoA ligase activity"/>
    <property type="evidence" value="ECO:0007669"/>
    <property type="project" value="TreeGrafter"/>
</dbReference>
<dbReference type="GO" id="GO:0016779">
    <property type="term" value="F:nucleotidyltransferase activity"/>
    <property type="evidence" value="ECO:0000314"/>
    <property type="project" value="UniProtKB"/>
</dbReference>
<dbReference type="GO" id="GO:0009056">
    <property type="term" value="P:catabolic process"/>
    <property type="evidence" value="ECO:0007669"/>
    <property type="project" value="UniProtKB-KW"/>
</dbReference>
<dbReference type="GO" id="GO:0006631">
    <property type="term" value="P:fatty acid metabolic process"/>
    <property type="evidence" value="ECO:0007669"/>
    <property type="project" value="TreeGrafter"/>
</dbReference>
<dbReference type="CDD" id="cd05920">
    <property type="entry name" value="23DHB-AMP_lg"/>
    <property type="match status" value="1"/>
</dbReference>
<dbReference type="FunFam" id="3.30.300.30:FF:000008">
    <property type="entry name" value="2,3-dihydroxybenzoate-AMP ligase"/>
    <property type="match status" value="1"/>
</dbReference>
<dbReference type="FunFam" id="3.40.50.980:FF:000004">
    <property type="entry name" value="2,3-dihydroxybenzoate-AMP ligase"/>
    <property type="match status" value="1"/>
</dbReference>
<dbReference type="FunFam" id="2.30.38.10:FF:000003">
    <property type="entry name" value="Vibriobactin-specific 2,3-dihydroxybenzoate-AMP ligase"/>
    <property type="match status" value="1"/>
</dbReference>
<dbReference type="FunFam" id="3.40.50.980:FF:000003">
    <property type="entry name" value="Vibriobactin-specific 2,3-dihydroxybenzoate-AMP ligase"/>
    <property type="match status" value="1"/>
</dbReference>
<dbReference type="Gene3D" id="3.30.300.30">
    <property type="match status" value="1"/>
</dbReference>
<dbReference type="Gene3D" id="3.40.50.980">
    <property type="match status" value="2"/>
</dbReference>
<dbReference type="Gene3D" id="2.30.38.10">
    <property type="entry name" value="Luciferase, Domain 3"/>
    <property type="match status" value="1"/>
</dbReference>
<dbReference type="InterPro" id="IPR025110">
    <property type="entry name" value="AMP-bd_C"/>
</dbReference>
<dbReference type="InterPro" id="IPR045851">
    <property type="entry name" value="AMP-bd_C_sf"/>
</dbReference>
<dbReference type="InterPro" id="IPR020845">
    <property type="entry name" value="AMP-binding_CS"/>
</dbReference>
<dbReference type="InterPro" id="IPR000873">
    <property type="entry name" value="AMP-dep_synth/lig_dom"/>
</dbReference>
<dbReference type="PANTHER" id="PTHR43201">
    <property type="entry name" value="ACYL-COA SYNTHETASE"/>
    <property type="match status" value="1"/>
</dbReference>
<dbReference type="PANTHER" id="PTHR43201:SF5">
    <property type="entry name" value="MEDIUM-CHAIN ACYL-COA LIGASE ACSF2, MITOCHONDRIAL"/>
    <property type="match status" value="1"/>
</dbReference>
<dbReference type="Pfam" id="PF00501">
    <property type="entry name" value="AMP-binding"/>
    <property type="match status" value="1"/>
</dbReference>
<dbReference type="Pfam" id="PF13193">
    <property type="entry name" value="AMP-binding_C"/>
    <property type="match status" value="1"/>
</dbReference>
<dbReference type="SUPFAM" id="SSF56801">
    <property type="entry name" value="Acetyl-CoA synthetase-like"/>
    <property type="match status" value="1"/>
</dbReference>
<dbReference type="PROSITE" id="PS00455">
    <property type="entry name" value="AMP_BINDING"/>
    <property type="match status" value="1"/>
</dbReference>
<feature type="chain" id="PRO_0000435739" description="Salicylyl-CoA synthase / salicylate adenylyltransferase">
    <location>
        <begin position="1"/>
        <end position="553"/>
    </location>
</feature>
<feature type="binding site" evidence="1">
    <location>
        <position position="203"/>
    </location>
    <ligand>
        <name>ATP</name>
        <dbReference type="ChEBI" id="CHEBI:30616"/>
    </ligand>
</feature>
<feature type="binding site" evidence="1">
    <location>
        <begin position="246"/>
        <end position="247"/>
    </location>
    <ligand>
        <name>substrate</name>
    </ligand>
</feature>
<feature type="binding site" evidence="1">
    <location>
        <position position="320"/>
    </location>
    <ligand>
        <name>ATP</name>
        <dbReference type="ChEBI" id="CHEBI:30616"/>
    </ligand>
</feature>
<feature type="binding site" evidence="1">
    <location>
        <position position="342"/>
    </location>
    <ligand>
        <name>ATP</name>
        <dbReference type="ChEBI" id="CHEBI:30616"/>
    </ligand>
</feature>
<feature type="binding site" evidence="1">
    <location>
        <position position="426"/>
    </location>
    <ligand>
        <name>ATP</name>
        <dbReference type="ChEBI" id="CHEBI:30616"/>
    </ligand>
</feature>
<feature type="binding site" evidence="1">
    <location>
        <position position="441"/>
    </location>
    <ligand>
        <name>ATP</name>
        <dbReference type="ChEBI" id="CHEBI:30616"/>
    </ligand>
</feature>
<feature type="binding site" evidence="1">
    <location>
        <position position="533"/>
    </location>
    <ligand>
        <name>ATP</name>
        <dbReference type="ChEBI" id="CHEBI:30616"/>
    </ligand>
</feature>
<feature type="binding site" evidence="1">
    <location>
        <position position="533"/>
    </location>
    <ligand>
        <name>substrate</name>
    </ligand>
</feature>
<accession>Q7X279</accession>
<reference key="1">
    <citation type="journal article" date="2004" name="Appl. Environ. Microbiol.">
        <title>Novel pathway of salicylate degradation by Streptomyces sp. strain WA46.</title>
        <authorList>
            <person name="Ishiyama D."/>
            <person name="Vujaklija D."/>
            <person name="Davies J."/>
        </authorList>
    </citation>
    <scope>NUCLEOTIDE SEQUENCE [GENOMIC DNA]</scope>
    <scope>FUNCTION</scope>
    <scope>CATALYTIC ACTIVITY</scope>
    <scope>DISRUPTION PHENOTYPE</scope>
    <scope>INDUCTION</scope>
    <scope>SUBSTRATE SPECIFICITY</scope>
    <source>
        <strain>WA46</strain>
    </source>
</reference>
<evidence type="ECO:0000250" key="1">
    <source>
        <dbReference type="UniProtKB" id="P40871"/>
    </source>
</evidence>
<evidence type="ECO:0000269" key="2">
    <source>
    </source>
</evidence>
<evidence type="ECO:0000303" key="3">
    <source>
    </source>
</evidence>
<evidence type="ECO:0000305" key="4"/>
<sequence>MTREGFVPWPKEAADRYREAGYWRGRPLGSYLHEWAETYGDTVAVVDGDTRLTYRQLVDRADGLACRLLDSGLNPGDAMLVQLPNGWEFVTLTLACLRAGIAPVMAMPAHRGHELRYLAAHAEVTSIAVPDRLGDFDHQALGREVAEDTPSVGLLLVAGGTVGTDATDLRALAEPADDPVTARARLDRIAPDSGDIAVFLLSGGTTGLPKLITRTHDDYEYNARRSAEVCGLDSDSVYLVALPAGHNFPLACPGILGTLMNGGRVVLARTPEPGKVLPLMAAEGVTATAAVPAVVQRWIDAVASGRHPAPPALRLLQVGGARLAPEVARRAEPVLGGTLQQVFGMAEGLLNYTRPDDPDDIKIETQGRPMCPDDEILVVDASDNPVPPGEMGALLTRGPYTPRGYYRAAEHNARAFTPDGWYRTGDVVRLHPSGNLVVEGRDKDLINRGGEKISAEEVENLIYRLPGVARVAAVAKADPDLGERVCAVVVVEPGTQLSLESVRAALTAMQVARYKLPEDLLVVDELPLTKVGKIDKKRLRDVVRGKADSVEAV</sequence>
<name>SDGA_STRSQ</name>
<proteinExistence type="evidence at protein level"/>
<gene>
    <name evidence="3" type="primary">sdgA</name>
</gene>